<organism>
    <name type="scientific">Homo sapiens</name>
    <name type="common">Human</name>
    <dbReference type="NCBI Taxonomy" id="9606"/>
    <lineage>
        <taxon>Eukaryota</taxon>
        <taxon>Metazoa</taxon>
        <taxon>Chordata</taxon>
        <taxon>Craniata</taxon>
        <taxon>Vertebrata</taxon>
        <taxon>Euteleostomi</taxon>
        <taxon>Mammalia</taxon>
        <taxon>Eutheria</taxon>
        <taxon>Euarchontoglires</taxon>
        <taxon>Primates</taxon>
        <taxon>Haplorrhini</taxon>
        <taxon>Catarrhini</taxon>
        <taxon>Hominidae</taxon>
        <taxon>Homo</taxon>
    </lineage>
</organism>
<evidence type="ECO:0000250" key="1">
    <source>
        <dbReference type="UniProtKB" id="Q3E731"/>
    </source>
</evidence>
<evidence type="ECO:0000255" key="2">
    <source>
        <dbReference type="PROSITE-ProRule" id="PRU01150"/>
    </source>
</evidence>
<evidence type="ECO:0000256" key="3">
    <source>
        <dbReference type="SAM" id="MobiDB-lite"/>
    </source>
</evidence>
<evidence type="ECO:0000269" key="4">
    <source>
    </source>
</evidence>
<evidence type="ECO:0000269" key="5">
    <source>
    </source>
</evidence>
<evidence type="ECO:0000269" key="6">
    <source>
    </source>
</evidence>
<evidence type="ECO:0000305" key="7"/>
<evidence type="ECO:0000305" key="8">
    <source>
    </source>
</evidence>
<evidence type="ECO:0007744" key="9">
    <source>
    </source>
</evidence>
<gene>
    <name type="primary">COX19</name>
</gene>
<feature type="initiator methionine" description="Removed" evidence="9">
    <location>
        <position position="1"/>
    </location>
</feature>
<feature type="chain" id="PRO_0000273151" description="Cytochrome c oxidase assembly protein COX19">
    <location>
        <begin position="2"/>
        <end position="90"/>
    </location>
</feature>
<feature type="domain" description="CHCH" evidence="2">
    <location>
        <begin position="27"/>
        <end position="69"/>
    </location>
</feature>
<feature type="region of interest" description="Disordered" evidence="3">
    <location>
        <begin position="1"/>
        <end position="20"/>
    </location>
</feature>
<feature type="short sequence motif" description="Cx9C motif 1" evidence="2">
    <location>
        <begin position="30"/>
        <end position="40"/>
    </location>
</feature>
<feature type="short sequence motif" description="Cx9C motif 2" evidence="2">
    <location>
        <begin position="51"/>
        <end position="61"/>
    </location>
</feature>
<feature type="compositionally biased region" description="Polar residues" evidence="3">
    <location>
        <begin position="1"/>
        <end position="12"/>
    </location>
</feature>
<feature type="modified residue" description="N-acetylserine" evidence="9">
    <location>
        <position position="2"/>
    </location>
</feature>
<feature type="disulfide bond" evidence="2 8">
    <location>
        <begin position="30"/>
        <end position="61"/>
    </location>
</feature>
<feature type="disulfide bond" evidence="2 8">
    <location>
        <begin position="40"/>
        <end position="51"/>
    </location>
</feature>
<reference key="1">
    <citation type="journal article" date="2005" name="Biochem. Biophys. Res. Commun.">
        <title>hCOX18 and hCOX19: two human genes involved in cytochrome c oxidase assembly.</title>
        <authorList>
            <person name="Sacconi S."/>
            <person name="Trevisson E."/>
            <person name="Pistollato F."/>
            <person name="Baldoin M.C."/>
            <person name="Rezzonico R."/>
            <person name="Bourget I."/>
            <person name="Desnuelle C."/>
            <person name="Tenconi R."/>
            <person name="Basso G."/>
            <person name="DiMauro S."/>
            <person name="Salviati L."/>
        </authorList>
    </citation>
    <scope>NUCLEOTIDE SEQUENCE [MRNA]</scope>
    <scope>SUBCELLULAR LOCATION</scope>
    <scope>TISSUE SPECIFICITY</scope>
</reference>
<reference key="2">
    <citation type="journal article" date="2004" name="Genome Res.">
        <title>The status, quality, and expansion of the NIH full-length cDNA project: the Mammalian Gene Collection (MGC).</title>
        <authorList>
            <consortium name="The MGC Project Team"/>
        </authorList>
    </citation>
    <scope>NUCLEOTIDE SEQUENCE [LARGE SCALE MRNA]</scope>
    <source>
        <tissue>Lung</tissue>
    </source>
</reference>
<reference key="3">
    <citation type="journal article" date="2009" name="Anal. Chem.">
        <title>Lys-N and trypsin cover complementary parts of the phosphoproteome in a refined SCX-based approach.</title>
        <authorList>
            <person name="Gauci S."/>
            <person name="Helbig A.O."/>
            <person name="Slijper M."/>
            <person name="Krijgsveld J."/>
            <person name="Heck A.J."/>
            <person name="Mohammed S."/>
        </authorList>
    </citation>
    <scope>ACETYLATION [LARGE SCALE ANALYSIS] AT SER-2</scope>
    <scope>CLEAVAGE OF INITIATOR METHIONINE [LARGE SCALE ANALYSIS]</scope>
    <scope>IDENTIFICATION BY MASS SPECTROMETRY [LARGE SCALE ANALYSIS]</scope>
</reference>
<reference key="4">
    <citation type="journal article" date="2011" name="BMC Syst. Biol.">
        <title>Initial characterization of the human central proteome.</title>
        <authorList>
            <person name="Burkard T.R."/>
            <person name="Planyavsky M."/>
            <person name="Kaupe I."/>
            <person name="Breitwieser F.P."/>
            <person name="Buerckstuemmer T."/>
            <person name="Bennett K.L."/>
            <person name="Superti-Furga G."/>
            <person name="Colinge J."/>
        </authorList>
    </citation>
    <scope>IDENTIFICATION BY MASS SPECTROMETRY [LARGE SCALE ANALYSIS]</scope>
</reference>
<reference key="5">
    <citation type="journal article" date="2013" name="Mol. Biol. Cell">
        <title>COX19 mediates the transduction of a mitochondrial redox signal from SCO1 that regulates ATP7A-mediated cellular copper efflux.</title>
        <authorList>
            <person name="Leary S.C."/>
            <person name="Cobine P.A."/>
            <person name="Nishimura T."/>
            <person name="Verdijk R.M."/>
            <person name="de Krijger R."/>
            <person name="de Coo R."/>
            <person name="Tarnopolsky M.A."/>
            <person name="Winge D.R."/>
            <person name="Shoubridge E.A."/>
        </authorList>
    </citation>
    <scope>FUNCTION</scope>
    <scope>SUBCELLULAR LOCATION</scope>
</reference>
<reference key="6">
    <citation type="journal article" date="2013" name="Mol. Biol. Cell">
        <title>Protein import and oxidative folding in the mitochondrial intermembrane space of intact mammalian cells.</title>
        <authorList>
            <person name="Fischer M."/>
            <person name="Horn S."/>
            <person name="Belkacemi A."/>
            <person name="Kojer K."/>
            <person name="Petrungaro C."/>
            <person name="Habich M."/>
            <person name="Ali M."/>
            <person name="Kuettner V."/>
            <person name="Bien M."/>
            <person name="Kauff F."/>
            <person name="Dengjel J."/>
            <person name="Herrmann J.M."/>
            <person name="Riemer J."/>
        </authorList>
    </citation>
    <scope>SUBCELLULAR LOCATION</scope>
    <scope>DISULFIDE BONDS</scope>
    <scope>INTERACTION WITH CHCHD4</scope>
</reference>
<reference key="7">
    <citation type="journal article" date="2015" name="Proteomics">
        <title>N-terminome analysis of the human mitochondrial proteome.</title>
        <authorList>
            <person name="Vaca Jacome A.S."/>
            <person name="Rabilloud T."/>
            <person name="Schaeffer-Reiss C."/>
            <person name="Rompais M."/>
            <person name="Ayoub D."/>
            <person name="Lane L."/>
            <person name="Bairoch A."/>
            <person name="Van Dorsselaer A."/>
            <person name="Carapito C."/>
        </authorList>
    </citation>
    <scope>IDENTIFICATION BY MASS SPECTROMETRY [LARGE SCALE ANALYSIS]</scope>
</reference>
<accession>Q49B96</accession>
<accession>A4FTX0</accession>
<keyword id="KW-0007">Acetylation</keyword>
<keyword id="KW-0963">Cytoplasm</keyword>
<keyword id="KW-1015">Disulfide bond</keyword>
<keyword id="KW-0496">Mitochondrion</keyword>
<keyword id="KW-1267">Proteomics identification</keyword>
<keyword id="KW-1185">Reference proteome</keyword>
<dbReference type="EMBL" id="AY957566">
    <property type="protein sequence ID" value="AAY35062.1"/>
    <property type="molecule type" value="mRNA"/>
</dbReference>
<dbReference type="EMBL" id="BC070383">
    <property type="protein sequence ID" value="AAH70383.1"/>
    <property type="molecule type" value="mRNA"/>
</dbReference>
<dbReference type="EMBL" id="BC103632">
    <property type="protein sequence ID" value="AAI03633.1"/>
    <property type="molecule type" value="mRNA"/>
</dbReference>
<dbReference type="EMBL" id="BC110420">
    <property type="protein sequence ID" value="AAI10421.1"/>
    <property type="molecule type" value="mRNA"/>
</dbReference>
<dbReference type="CCDS" id="CCDS34582.1"/>
<dbReference type="RefSeq" id="NP_001026788.1">
    <property type="nucleotide sequence ID" value="NM_001031617.3"/>
</dbReference>
<dbReference type="SMR" id="Q49B96"/>
<dbReference type="BioGRID" id="124748">
    <property type="interactions" value="8"/>
</dbReference>
<dbReference type="FunCoup" id="Q49B96">
    <property type="interactions" value="1860"/>
</dbReference>
<dbReference type="IntAct" id="Q49B96">
    <property type="interactions" value="6"/>
</dbReference>
<dbReference type="MINT" id="Q49B96"/>
<dbReference type="STRING" id="9606.ENSP00000342015"/>
<dbReference type="TCDB" id="8.A.239.1.1">
    <property type="family name" value="the cox19 assembly protein (cox19) family"/>
</dbReference>
<dbReference type="iPTMnet" id="Q49B96"/>
<dbReference type="MetOSite" id="Q49B96"/>
<dbReference type="PhosphoSitePlus" id="Q49B96"/>
<dbReference type="BioMuta" id="COX19"/>
<dbReference type="DMDM" id="121943561"/>
<dbReference type="jPOST" id="Q49B96"/>
<dbReference type="MassIVE" id="Q49B96"/>
<dbReference type="PaxDb" id="9606-ENSP00000342015"/>
<dbReference type="PeptideAtlas" id="Q49B96"/>
<dbReference type="ProteomicsDB" id="62072"/>
<dbReference type="Pumba" id="Q49B96"/>
<dbReference type="Antibodypedia" id="34791">
    <property type="antibodies" value="81 antibodies from 18 providers"/>
</dbReference>
<dbReference type="DNASU" id="90639"/>
<dbReference type="Ensembl" id="ENST00000344111.4">
    <property type="protein sequence ID" value="ENSP00000342015.3"/>
    <property type="gene ID" value="ENSG00000240230.6"/>
</dbReference>
<dbReference type="GeneID" id="90639"/>
<dbReference type="KEGG" id="hsa:90639"/>
<dbReference type="MANE-Select" id="ENST00000344111.4">
    <property type="protein sequence ID" value="ENSP00000342015.3"/>
    <property type="RefSeq nucleotide sequence ID" value="NM_001031617.3"/>
    <property type="RefSeq protein sequence ID" value="NP_001026788.1"/>
</dbReference>
<dbReference type="UCSC" id="uc003sjp.2">
    <property type="organism name" value="human"/>
</dbReference>
<dbReference type="AGR" id="HGNC:28074"/>
<dbReference type="CTD" id="90639"/>
<dbReference type="DisGeNET" id="90639"/>
<dbReference type="GeneCards" id="COX19"/>
<dbReference type="HGNC" id="HGNC:28074">
    <property type="gene designation" value="COX19"/>
</dbReference>
<dbReference type="HPA" id="ENSG00000240230">
    <property type="expression patterns" value="Low tissue specificity"/>
</dbReference>
<dbReference type="MalaCards" id="COX19"/>
<dbReference type="MIM" id="610429">
    <property type="type" value="gene"/>
</dbReference>
<dbReference type="neXtProt" id="NX_Q49B96"/>
<dbReference type="OpenTargets" id="ENSG00000240230"/>
<dbReference type="PharmGKB" id="PA145008561"/>
<dbReference type="VEuPathDB" id="HostDB:ENSG00000240230"/>
<dbReference type="eggNOG" id="KOG3477">
    <property type="taxonomic scope" value="Eukaryota"/>
</dbReference>
<dbReference type="GeneTree" id="ENSGT00390000016895"/>
<dbReference type="HOGENOM" id="CLU_141947_5_0_1"/>
<dbReference type="InParanoid" id="Q49B96"/>
<dbReference type="OMA" id="GTNDEAC"/>
<dbReference type="PAN-GO" id="Q49B96">
    <property type="GO annotations" value="2 GO annotations based on evolutionary models"/>
</dbReference>
<dbReference type="PhylomeDB" id="Q49B96"/>
<dbReference type="TreeFam" id="TF321525"/>
<dbReference type="PathwayCommons" id="Q49B96"/>
<dbReference type="Reactome" id="R-HSA-1268020">
    <property type="pathway name" value="Mitochondrial protein import"/>
</dbReference>
<dbReference type="Reactome" id="R-HSA-9864848">
    <property type="pathway name" value="Complex IV assembly"/>
</dbReference>
<dbReference type="SignaLink" id="Q49B96"/>
<dbReference type="BioGRID-ORCS" id="90639">
    <property type="hits" value="258 hits in 1146 CRISPR screens"/>
</dbReference>
<dbReference type="ChiTaRS" id="COX19">
    <property type="organism name" value="human"/>
</dbReference>
<dbReference type="GenomeRNAi" id="90639"/>
<dbReference type="Pharos" id="Q49B96">
    <property type="development level" value="Tbio"/>
</dbReference>
<dbReference type="PRO" id="PR:Q49B96"/>
<dbReference type="Proteomes" id="UP000005640">
    <property type="component" value="Chromosome 7"/>
</dbReference>
<dbReference type="RNAct" id="Q49B96">
    <property type="molecule type" value="protein"/>
</dbReference>
<dbReference type="Bgee" id="ENSG00000240230">
    <property type="expression patterns" value="Expressed in tendon of biceps brachii and 177 other cell types or tissues"/>
</dbReference>
<dbReference type="ExpressionAtlas" id="Q49B96">
    <property type="expression patterns" value="baseline and differential"/>
</dbReference>
<dbReference type="GO" id="GO:0005829">
    <property type="term" value="C:cytosol"/>
    <property type="evidence" value="ECO:0000314"/>
    <property type="project" value="UniProtKB"/>
</dbReference>
<dbReference type="GO" id="GO:0005758">
    <property type="term" value="C:mitochondrial intermembrane space"/>
    <property type="evidence" value="ECO:0000314"/>
    <property type="project" value="UniProtKB"/>
</dbReference>
<dbReference type="GO" id="GO:0005739">
    <property type="term" value="C:mitochondrion"/>
    <property type="evidence" value="ECO:0000314"/>
    <property type="project" value="UniProtKB"/>
</dbReference>
<dbReference type="GO" id="GO:0006878">
    <property type="term" value="P:intracellular copper ion homeostasis"/>
    <property type="evidence" value="ECO:0000315"/>
    <property type="project" value="UniProtKB"/>
</dbReference>
<dbReference type="GO" id="GO:0033617">
    <property type="term" value="P:mitochondrial cytochrome c oxidase assembly"/>
    <property type="evidence" value="ECO:0000318"/>
    <property type="project" value="GO_Central"/>
</dbReference>
<dbReference type="InterPro" id="IPR010625">
    <property type="entry name" value="CHCH"/>
</dbReference>
<dbReference type="InterPro" id="IPR051383">
    <property type="entry name" value="COX19"/>
</dbReference>
<dbReference type="InterPro" id="IPR009069">
    <property type="entry name" value="Cys_alpha_HP_mot_SF"/>
</dbReference>
<dbReference type="PANTHER" id="PTHR21107">
    <property type="entry name" value="CYTOCHROME C OXIDASE ASSEMBLY PROTEIN COX19"/>
    <property type="match status" value="1"/>
</dbReference>
<dbReference type="PANTHER" id="PTHR21107:SF2">
    <property type="entry name" value="CYTOCHROME C OXIDASE ASSEMBLY PROTEIN COX19"/>
    <property type="match status" value="1"/>
</dbReference>
<dbReference type="Pfam" id="PF06747">
    <property type="entry name" value="CHCH"/>
    <property type="match status" value="1"/>
</dbReference>
<dbReference type="SUPFAM" id="SSF47072">
    <property type="entry name" value="Cysteine alpha-hairpin motif"/>
    <property type="match status" value="1"/>
</dbReference>
<dbReference type="PROSITE" id="PS51808">
    <property type="entry name" value="CHCH"/>
    <property type="match status" value="1"/>
</dbReference>
<name>COX19_HUMAN</name>
<proteinExistence type="evidence at protein level"/>
<protein>
    <recommendedName>
        <fullName>Cytochrome c oxidase assembly protein COX19</fullName>
        <shortName>hCOX19</shortName>
    </recommendedName>
</protein>
<sequence length="90" mass="10394">MSTAMNFGTKSFQPRPPDKGSFPLDHLGECKSFKEKFMKCLHNNNFENALCRKESKEYLECRMERKLMLQEPLEKLGFGDLTSGKSEAKK</sequence>
<comment type="function">
    <text evidence="1 5">Required for the transduction of an SCO1-dependent redox signal from the mitochondrion to ATP7A to regulate cellular copper homeostasis (PubMed:23345593). May be required for the assembly of mitochondrial cytochrome c oxidase (By similarity).</text>
</comment>
<comment type="subunit">
    <text evidence="6">Interacts with CHCHD4/MIA40 forming transient intermolecular disulfide bridges.</text>
</comment>
<comment type="subcellular location">
    <subcellularLocation>
        <location evidence="4 5 6">Cytoplasm</location>
        <location evidence="4 5 6">Cytosol</location>
    </subcellularLocation>
    <subcellularLocation>
        <location evidence="5 6">Mitochondrion intermembrane space</location>
    </subcellularLocation>
    <subcellularLocation>
        <location evidence="5 6">Mitochondrion</location>
    </subcellularLocation>
    <text evidence="5">Partitions between mitochondria and the cytosol in a copper-dependent manner. Enriched in the cytosol when intracellular copper concentrations are elevated.</text>
</comment>
<comment type="tissue specificity">
    <text evidence="4">Ubiquitously expressed. Highly expressed in skeletal muscle.</text>
</comment>
<comment type="similarity">
    <text evidence="7">Belongs to the COX19 family.</text>
</comment>